<dbReference type="EMBL" id="AY178864">
    <property type="protein sequence ID" value="AAP29379.2"/>
    <property type="molecule type" value="Genomic_DNA"/>
</dbReference>
<dbReference type="RefSeq" id="NP_848047.2">
    <property type="nucleotide sequence ID" value="NC_004766.1"/>
</dbReference>
<dbReference type="SMR" id="Q85FN2"/>
<dbReference type="GeneID" id="807415"/>
<dbReference type="GO" id="GO:0009535">
    <property type="term" value="C:chloroplast thylakoid membrane"/>
    <property type="evidence" value="ECO:0007669"/>
    <property type="project" value="UniProtKB-SubCell"/>
</dbReference>
<dbReference type="GO" id="GO:0045259">
    <property type="term" value="C:proton-transporting ATP synthase complex"/>
    <property type="evidence" value="ECO:0007669"/>
    <property type="project" value="UniProtKB-KW"/>
</dbReference>
<dbReference type="GO" id="GO:0033177">
    <property type="term" value="C:proton-transporting two-sector ATPase complex, proton-transporting domain"/>
    <property type="evidence" value="ECO:0007669"/>
    <property type="project" value="InterPro"/>
</dbReference>
<dbReference type="GO" id="GO:0008289">
    <property type="term" value="F:lipid binding"/>
    <property type="evidence" value="ECO:0007669"/>
    <property type="project" value="UniProtKB-KW"/>
</dbReference>
<dbReference type="GO" id="GO:0046933">
    <property type="term" value="F:proton-transporting ATP synthase activity, rotational mechanism"/>
    <property type="evidence" value="ECO:0007669"/>
    <property type="project" value="UniProtKB-UniRule"/>
</dbReference>
<dbReference type="CDD" id="cd18183">
    <property type="entry name" value="ATP-synt_Fo_c_ATPH"/>
    <property type="match status" value="1"/>
</dbReference>
<dbReference type="FunFam" id="1.20.20.10:FF:000001">
    <property type="entry name" value="ATP synthase subunit c, chloroplastic"/>
    <property type="match status" value="1"/>
</dbReference>
<dbReference type="Gene3D" id="1.20.20.10">
    <property type="entry name" value="F1F0 ATP synthase subunit C"/>
    <property type="match status" value="1"/>
</dbReference>
<dbReference type="HAMAP" id="MF_01396">
    <property type="entry name" value="ATP_synth_c_bact"/>
    <property type="match status" value="1"/>
</dbReference>
<dbReference type="InterPro" id="IPR005953">
    <property type="entry name" value="ATP_synth_csu_bac/chlpt"/>
</dbReference>
<dbReference type="InterPro" id="IPR000454">
    <property type="entry name" value="ATP_synth_F0_csu"/>
</dbReference>
<dbReference type="InterPro" id="IPR020537">
    <property type="entry name" value="ATP_synth_F0_csu_DDCD_BS"/>
</dbReference>
<dbReference type="InterPro" id="IPR038662">
    <property type="entry name" value="ATP_synth_F0_csu_sf"/>
</dbReference>
<dbReference type="InterPro" id="IPR002379">
    <property type="entry name" value="ATPase_proteolipid_c-like_dom"/>
</dbReference>
<dbReference type="InterPro" id="IPR035921">
    <property type="entry name" value="F/V-ATP_Csub_sf"/>
</dbReference>
<dbReference type="NCBIfam" id="TIGR01260">
    <property type="entry name" value="ATP_synt_c"/>
    <property type="match status" value="1"/>
</dbReference>
<dbReference type="NCBIfam" id="NF005608">
    <property type="entry name" value="PRK07354.1"/>
    <property type="match status" value="1"/>
</dbReference>
<dbReference type="PANTHER" id="PTHR10031">
    <property type="entry name" value="ATP SYNTHASE LIPID-BINDING PROTEIN, MITOCHONDRIAL"/>
    <property type="match status" value="1"/>
</dbReference>
<dbReference type="PANTHER" id="PTHR10031:SF0">
    <property type="entry name" value="ATPASE PROTEIN 9"/>
    <property type="match status" value="1"/>
</dbReference>
<dbReference type="Pfam" id="PF00137">
    <property type="entry name" value="ATP-synt_C"/>
    <property type="match status" value="1"/>
</dbReference>
<dbReference type="PRINTS" id="PR00124">
    <property type="entry name" value="ATPASEC"/>
</dbReference>
<dbReference type="SUPFAM" id="SSF81333">
    <property type="entry name" value="F1F0 ATP synthase subunit C"/>
    <property type="match status" value="1"/>
</dbReference>
<dbReference type="PROSITE" id="PS00605">
    <property type="entry name" value="ATPASE_C"/>
    <property type="match status" value="1"/>
</dbReference>
<feature type="chain" id="PRO_0000112180" description="ATP synthase subunit c, chloroplastic">
    <location>
        <begin position="1"/>
        <end position="81"/>
    </location>
</feature>
<feature type="transmembrane region" description="Helical" evidence="1">
    <location>
        <begin position="3"/>
        <end position="23"/>
    </location>
</feature>
<feature type="transmembrane region" description="Helical" evidence="1">
    <location>
        <begin position="57"/>
        <end position="77"/>
    </location>
</feature>
<feature type="site" description="Reversibly protonated during proton transport" evidence="1">
    <location>
        <position position="61"/>
    </location>
</feature>
<accession>Q85FN2</accession>
<organism>
    <name type="scientific">Adiantum capillus-veneris</name>
    <name type="common">Maidenhair fern</name>
    <dbReference type="NCBI Taxonomy" id="13818"/>
    <lineage>
        <taxon>Eukaryota</taxon>
        <taxon>Viridiplantae</taxon>
        <taxon>Streptophyta</taxon>
        <taxon>Embryophyta</taxon>
        <taxon>Tracheophyta</taxon>
        <taxon>Polypodiopsida</taxon>
        <taxon>Polypodiidae</taxon>
        <taxon>Polypodiales</taxon>
        <taxon>Pteridineae</taxon>
        <taxon>Pteridaceae</taxon>
        <taxon>Vittarioideae</taxon>
        <taxon>Adiantum</taxon>
    </lineage>
</organism>
<gene>
    <name evidence="1" type="primary">atpH</name>
</gene>
<proteinExistence type="evidence at transcript level"/>
<protein>
    <recommendedName>
        <fullName evidence="1">ATP synthase subunit c, chloroplastic</fullName>
    </recommendedName>
    <alternativeName>
        <fullName evidence="1">ATP synthase F(0) sector subunit c</fullName>
    </alternativeName>
    <alternativeName>
        <fullName evidence="1">ATPase subunit III</fullName>
    </alternativeName>
    <alternativeName>
        <fullName evidence="1">F-type ATPase subunit c</fullName>
        <shortName evidence="1">F-ATPase subunit c</shortName>
    </alternativeName>
    <alternativeName>
        <fullName evidence="1">Lipid-binding protein</fullName>
    </alternativeName>
</protein>
<geneLocation type="chloroplast"/>
<reference key="1">
    <citation type="journal article" date="2003" name="DNA Res.">
        <title>Complete nucleotide sequence of the chloroplast genome from a leptosporangiate fern, Adiantum capillus-veneris L.</title>
        <authorList>
            <person name="Wolf P.G."/>
            <person name="Rowe C.A."/>
            <person name="Sinclair R.B."/>
            <person name="Hasebe M."/>
        </authorList>
    </citation>
    <scope>NUCLEOTIDE SEQUENCE [LARGE SCALE GENOMIC DNA]</scope>
</reference>
<reference key="2">
    <citation type="journal article" date="2004" name="Gene">
        <title>High levels of RNA editing in a vascular plant chloroplast genome: analysis of transcripts from the fern Adiantum capillus-veneris.</title>
        <authorList>
            <person name="Wolf P.G."/>
            <person name="Rowe C.A."/>
            <person name="Hasebe M."/>
        </authorList>
    </citation>
    <scope>NUCLEOTIDE SEQUENCE [GENOMIC DNA]</scope>
    <scope>RNA EDITING</scope>
    <source>
        <tissue>Frond</tissue>
    </source>
</reference>
<evidence type="ECO:0000255" key="1">
    <source>
        <dbReference type="HAMAP-Rule" id="MF_01396"/>
    </source>
</evidence>
<evidence type="ECO:0000269" key="2">
    <source>
    </source>
</evidence>
<keyword id="KW-0066">ATP synthesis</keyword>
<keyword id="KW-0138">CF(0)</keyword>
<keyword id="KW-0150">Chloroplast</keyword>
<keyword id="KW-0375">Hydrogen ion transport</keyword>
<keyword id="KW-0406">Ion transport</keyword>
<keyword id="KW-0446">Lipid-binding</keyword>
<keyword id="KW-0472">Membrane</keyword>
<keyword id="KW-0934">Plastid</keyword>
<keyword id="KW-0691">RNA editing</keyword>
<keyword id="KW-0793">Thylakoid</keyword>
<keyword id="KW-0812">Transmembrane</keyword>
<keyword id="KW-1133">Transmembrane helix</keyword>
<keyword id="KW-0813">Transport</keyword>
<comment type="function">
    <text evidence="1">F(1)F(0) ATP synthase produces ATP from ADP in the presence of a proton or sodium gradient. F-type ATPases consist of two structural domains, F(1) containing the extramembraneous catalytic core and F(0) containing the membrane proton channel, linked together by a central stalk and a peripheral stalk. During catalysis, ATP synthesis in the catalytic domain of F(1) is coupled via a rotary mechanism of the central stalk subunits to proton translocation.</text>
</comment>
<comment type="function">
    <text evidence="1">Key component of the F(0) channel; it plays a direct role in translocation across the membrane. A homomeric c-ring of between 10-14 subunits forms the central stalk rotor element with the F(1) delta and epsilon subunits.</text>
</comment>
<comment type="subunit">
    <text evidence="1">F-type ATPases have 2 components, F(1) - the catalytic core - and F(0) - the membrane proton channel. F(1) has five subunits: alpha(3), beta(3), gamma(1), delta(1), epsilon(1). F(0) has four main subunits: a(1), b(1), b'(1) and c(10-14). The alpha and beta chains form an alternating ring which encloses part of the gamma chain. F(1) is attached to F(0) by a central stalk formed by the gamma and epsilon chains, while a peripheral stalk is formed by the delta, b and b' chains.</text>
</comment>
<comment type="subcellular location">
    <subcellularLocation>
        <location evidence="1">Plastid</location>
        <location evidence="1">Chloroplast thylakoid membrane</location>
        <topology evidence="1">Multi-pass membrane protein</topology>
    </subcellularLocation>
</comment>
<comment type="RNA editing">
    <location>
        <position position="57" evidence="2"/>
    </location>
    <location>
        <position position="68" evidence="2"/>
    </location>
    <location>
        <position position="72" evidence="2"/>
    </location>
    <location>
        <position position="74" evidence="2"/>
    </location>
    <location>
        <position position="75" evidence="2"/>
    </location>
    <location>
        <position position="80" evidence="2"/>
    </location>
</comment>
<comment type="miscellaneous">
    <text>In plastids the F-type ATPase is also known as CF(1)CF(0).</text>
</comment>
<comment type="similarity">
    <text evidence="1">Belongs to the ATPase C chain family.</text>
</comment>
<name>ATPH_ADICA</name>
<sequence length="81" mass="7990">MNPLISAASVIAAGLAVGLASIGPGVGQGTAAGQAVEGIARQPEAEGKIRGTLLLSLAFMEALTIYGLVVALALLFANPFV</sequence>